<name>RL31_HAEI8</name>
<accession>Q4QME1</accession>
<proteinExistence type="inferred from homology"/>
<evidence type="ECO:0000255" key="1">
    <source>
        <dbReference type="HAMAP-Rule" id="MF_00501"/>
    </source>
</evidence>
<evidence type="ECO:0000305" key="2"/>
<protein>
    <recommendedName>
        <fullName evidence="1">Large ribosomal subunit protein bL31</fullName>
    </recommendedName>
    <alternativeName>
        <fullName evidence="2">50S ribosomal protein L31</fullName>
    </alternativeName>
</protein>
<keyword id="KW-0479">Metal-binding</keyword>
<keyword id="KW-0687">Ribonucleoprotein</keyword>
<keyword id="KW-0689">Ribosomal protein</keyword>
<keyword id="KW-0694">RNA-binding</keyword>
<keyword id="KW-0699">rRNA-binding</keyword>
<keyword id="KW-0862">Zinc</keyword>
<comment type="function">
    <text evidence="1">Binds the 23S rRNA.</text>
</comment>
<comment type="cofactor">
    <cofactor evidence="1">
        <name>Zn(2+)</name>
        <dbReference type="ChEBI" id="CHEBI:29105"/>
    </cofactor>
    <text evidence="1">Binds 1 zinc ion per subunit.</text>
</comment>
<comment type="subunit">
    <text evidence="1">Part of the 50S ribosomal subunit.</text>
</comment>
<comment type="similarity">
    <text evidence="1">Belongs to the bacterial ribosomal protein bL31 family. Type A subfamily.</text>
</comment>
<feature type="chain" id="PRO_0000259190" description="Large ribosomal subunit protein bL31">
    <location>
        <begin position="1"/>
        <end position="70"/>
    </location>
</feature>
<feature type="binding site" evidence="1">
    <location>
        <position position="16"/>
    </location>
    <ligand>
        <name>Zn(2+)</name>
        <dbReference type="ChEBI" id="CHEBI:29105"/>
    </ligand>
</feature>
<feature type="binding site" evidence="1">
    <location>
        <position position="18"/>
    </location>
    <ligand>
        <name>Zn(2+)</name>
        <dbReference type="ChEBI" id="CHEBI:29105"/>
    </ligand>
</feature>
<feature type="binding site" evidence="1">
    <location>
        <position position="37"/>
    </location>
    <ligand>
        <name>Zn(2+)</name>
        <dbReference type="ChEBI" id="CHEBI:29105"/>
    </ligand>
</feature>
<feature type="binding site" evidence="1">
    <location>
        <position position="40"/>
    </location>
    <ligand>
        <name>Zn(2+)</name>
        <dbReference type="ChEBI" id="CHEBI:29105"/>
    </ligand>
</feature>
<sequence length="70" mass="7819">MKQGIHPEYKEVTATCSCGNVIKTRSTLGKDINLDVCGNCHPFYTGKQRVVDTGGRVERFNSRFKIPSTK</sequence>
<organism>
    <name type="scientific">Haemophilus influenzae (strain 86-028NP)</name>
    <dbReference type="NCBI Taxonomy" id="281310"/>
    <lineage>
        <taxon>Bacteria</taxon>
        <taxon>Pseudomonadati</taxon>
        <taxon>Pseudomonadota</taxon>
        <taxon>Gammaproteobacteria</taxon>
        <taxon>Pasteurellales</taxon>
        <taxon>Pasteurellaceae</taxon>
        <taxon>Haemophilus</taxon>
    </lineage>
</organism>
<gene>
    <name evidence="1" type="primary">rpmE</name>
    <name type="ordered locus">NTHI0917</name>
</gene>
<reference key="1">
    <citation type="journal article" date="2005" name="J. Bacteriol.">
        <title>Genomic sequence of an otitis media isolate of nontypeable Haemophilus influenzae: comparative study with H. influenzae serotype d, strain KW20.</title>
        <authorList>
            <person name="Harrison A."/>
            <person name="Dyer D.W."/>
            <person name="Gillaspy A."/>
            <person name="Ray W.C."/>
            <person name="Mungur R."/>
            <person name="Carson M.B."/>
            <person name="Zhong H."/>
            <person name="Gipson J."/>
            <person name="Gipson M."/>
            <person name="Johnson L.S."/>
            <person name="Lewis L."/>
            <person name="Bakaletz L.O."/>
            <person name="Munson R.S. Jr."/>
        </authorList>
    </citation>
    <scope>NUCLEOTIDE SEQUENCE [LARGE SCALE GENOMIC DNA]</scope>
    <source>
        <strain>86-028NP</strain>
    </source>
</reference>
<dbReference type="EMBL" id="CP000057">
    <property type="protein sequence ID" value="AAX87806.1"/>
    <property type="molecule type" value="Genomic_DNA"/>
</dbReference>
<dbReference type="RefSeq" id="WP_011272207.1">
    <property type="nucleotide sequence ID" value="NC_007146.2"/>
</dbReference>
<dbReference type="SMR" id="Q4QME1"/>
<dbReference type="KEGG" id="hit:NTHI0917"/>
<dbReference type="HOGENOM" id="CLU_114306_4_3_6"/>
<dbReference type="Proteomes" id="UP000002525">
    <property type="component" value="Chromosome"/>
</dbReference>
<dbReference type="GO" id="GO:1990904">
    <property type="term" value="C:ribonucleoprotein complex"/>
    <property type="evidence" value="ECO:0007669"/>
    <property type="project" value="UniProtKB-KW"/>
</dbReference>
<dbReference type="GO" id="GO:0005840">
    <property type="term" value="C:ribosome"/>
    <property type="evidence" value="ECO:0007669"/>
    <property type="project" value="UniProtKB-KW"/>
</dbReference>
<dbReference type="GO" id="GO:0046872">
    <property type="term" value="F:metal ion binding"/>
    <property type="evidence" value="ECO:0007669"/>
    <property type="project" value="UniProtKB-KW"/>
</dbReference>
<dbReference type="GO" id="GO:0019843">
    <property type="term" value="F:rRNA binding"/>
    <property type="evidence" value="ECO:0007669"/>
    <property type="project" value="UniProtKB-KW"/>
</dbReference>
<dbReference type="GO" id="GO:0003735">
    <property type="term" value="F:structural constituent of ribosome"/>
    <property type="evidence" value="ECO:0007669"/>
    <property type="project" value="InterPro"/>
</dbReference>
<dbReference type="GO" id="GO:0006412">
    <property type="term" value="P:translation"/>
    <property type="evidence" value="ECO:0007669"/>
    <property type="project" value="UniProtKB-UniRule"/>
</dbReference>
<dbReference type="FunFam" id="4.10.830.30:FF:000001">
    <property type="entry name" value="50S ribosomal protein L31"/>
    <property type="match status" value="1"/>
</dbReference>
<dbReference type="Gene3D" id="4.10.830.30">
    <property type="entry name" value="Ribosomal protein L31"/>
    <property type="match status" value="1"/>
</dbReference>
<dbReference type="HAMAP" id="MF_00501">
    <property type="entry name" value="Ribosomal_bL31_1"/>
    <property type="match status" value="1"/>
</dbReference>
<dbReference type="InterPro" id="IPR034704">
    <property type="entry name" value="Ribosomal_bL28/bL31-like_sf"/>
</dbReference>
<dbReference type="InterPro" id="IPR002150">
    <property type="entry name" value="Ribosomal_bL31"/>
</dbReference>
<dbReference type="InterPro" id="IPR027491">
    <property type="entry name" value="Ribosomal_bL31_A"/>
</dbReference>
<dbReference type="InterPro" id="IPR042105">
    <property type="entry name" value="Ribosomal_bL31_sf"/>
</dbReference>
<dbReference type="NCBIfam" id="TIGR00105">
    <property type="entry name" value="L31"/>
    <property type="match status" value="1"/>
</dbReference>
<dbReference type="NCBIfam" id="NF000612">
    <property type="entry name" value="PRK00019.1"/>
    <property type="match status" value="1"/>
</dbReference>
<dbReference type="NCBIfam" id="NF001809">
    <property type="entry name" value="PRK00528.1"/>
    <property type="match status" value="1"/>
</dbReference>
<dbReference type="PANTHER" id="PTHR33280">
    <property type="entry name" value="50S RIBOSOMAL PROTEIN L31, CHLOROPLASTIC"/>
    <property type="match status" value="1"/>
</dbReference>
<dbReference type="PANTHER" id="PTHR33280:SF6">
    <property type="entry name" value="LARGE RIBOSOMAL SUBUNIT PROTEIN BL31A"/>
    <property type="match status" value="1"/>
</dbReference>
<dbReference type="Pfam" id="PF01197">
    <property type="entry name" value="Ribosomal_L31"/>
    <property type="match status" value="1"/>
</dbReference>
<dbReference type="PRINTS" id="PR01249">
    <property type="entry name" value="RIBOSOMALL31"/>
</dbReference>
<dbReference type="SUPFAM" id="SSF143800">
    <property type="entry name" value="L28p-like"/>
    <property type="match status" value="1"/>
</dbReference>
<dbReference type="PROSITE" id="PS01143">
    <property type="entry name" value="RIBOSOMAL_L31"/>
    <property type="match status" value="1"/>
</dbReference>